<keyword id="KW-0963">Cytoplasm</keyword>
<keyword id="KW-0227">DNA damage</keyword>
<keyword id="KW-0228">DNA excision</keyword>
<keyword id="KW-0234">DNA repair</keyword>
<keyword id="KW-0267">Excision nuclease</keyword>
<keyword id="KW-0742">SOS response</keyword>
<proteinExistence type="inferred from homology"/>
<comment type="function">
    <text evidence="1">The UvrABC repair system catalyzes the recognition and processing of DNA lesions. UvrC both incises the 5' and 3' sides of the lesion. The N-terminal half is responsible for the 3' incision and the C-terminal half is responsible for the 5' incision.</text>
</comment>
<comment type="subunit">
    <text evidence="1">Interacts with UvrB in an incision complex.</text>
</comment>
<comment type="subcellular location">
    <subcellularLocation>
        <location evidence="1">Cytoplasm</location>
    </subcellularLocation>
</comment>
<comment type="similarity">
    <text evidence="1">Belongs to the UvrC family.</text>
</comment>
<organism>
    <name type="scientific">Mycobacterium sp. (strain JLS)</name>
    <dbReference type="NCBI Taxonomy" id="164757"/>
    <lineage>
        <taxon>Bacteria</taxon>
        <taxon>Bacillati</taxon>
        <taxon>Actinomycetota</taxon>
        <taxon>Actinomycetes</taxon>
        <taxon>Mycobacteriales</taxon>
        <taxon>Mycobacteriaceae</taxon>
        <taxon>Mycobacterium</taxon>
    </lineage>
</organism>
<dbReference type="EMBL" id="CP000580">
    <property type="protein sequence ID" value="ABN98220.1"/>
    <property type="molecule type" value="Genomic_DNA"/>
</dbReference>
<dbReference type="SMR" id="A3PZ93"/>
<dbReference type="KEGG" id="mjl:Mjls_2436"/>
<dbReference type="HOGENOM" id="CLU_014841_1_1_11"/>
<dbReference type="BioCyc" id="MSP164757:G1G8C-2455-MONOMER"/>
<dbReference type="GO" id="GO:0005737">
    <property type="term" value="C:cytoplasm"/>
    <property type="evidence" value="ECO:0007669"/>
    <property type="project" value="UniProtKB-SubCell"/>
</dbReference>
<dbReference type="GO" id="GO:0009380">
    <property type="term" value="C:excinuclease repair complex"/>
    <property type="evidence" value="ECO:0007669"/>
    <property type="project" value="InterPro"/>
</dbReference>
<dbReference type="GO" id="GO:0003677">
    <property type="term" value="F:DNA binding"/>
    <property type="evidence" value="ECO:0007669"/>
    <property type="project" value="UniProtKB-UniRule"/>
</dbReference>
<dbReference type="GO" id="GO:0009381">
    <property type="term" value="F:excinuclease ABC activity"/>
    <property type="evidence" value="ECO:0007669"/>
    <property type="project" value="UniProtKB-UniRule"/>
</dbReference>
<dbReference type="GO" id="GO:0006289">
    <property type="term" value="P:nucleotide-excision repair"/>
    <property type="evidence" value="ECO:0007669"/>
    <property type="project" value="UniProtKB-UniRule"/>
</dbReference>
<dbReference type="GO" id="GO:0009432">
    <property type="term" value="P:SOS response"/>
    <property type="evidence" value="ECO:0007669"/>
    <property type="project" value="UniProtKB-UniRule"/>
</dbReference>
<dbReference type="CDD" id="cd10434">
    <property type="entry name" value="GIY-YIG_UvrC_Cho"/>
    <property type="match status" value="1"/>
</dbReference>
<dbReference type="FunFam" id="3.30.420.340:FF:000003">
    <property type="entry name" value="UvrABC system protein C"/>
    <property type="match status" value="1"/>
</dbReference>
<dbReference type="FunFam" id="3.40.1440.10:FF:000001">
    <property type="entry name" value="UvrABC system protein C"/>
    <property type="match status" value="1"/>
</dbReference>
<dbReference type="Gene3D" id="1.10.150.20">
    <property type="entry name" value="5' to 3' exonuclease, C-terminal subdomain"/>
    <property type="match status" value="1"/>
</dbReference>
<dbReference type="Gene3D" id="3.40.1440.10">
    <property type="entry name" value="GIY-YIG endonuclease"/>
    <property type="match status" value="1"/>
</dbReference>
<dbReference type="Gene3D" id="4.10.860.10">
    <property type="entry name" value="UVR domain"/>
    <property type="match status" value="1"/>
</dbReference>
<dbReference type="Gene3D" id="3.30.420.340">
    <property type="entry name" value="UvrC, RNAse H endonuclease domain"/>
    <property type="match status" value="1"/>
</dbReference>
<dbReference type="HAMAP" id="MF_00203">
    <property type="entry name" value="UvrC"/>
    <property type="match status" value="1"/>
</dbReference>
<dbReference type="InterPro" id="IPR000305">
    <property type="entry name" value="GIY-YIG_endonuc"/>
</dbReference>
<dbReference type="InterPro" id="IPR035901">
    <property type="entry name" value="GIY-YIG_endonuc_sf"/>
</dbReference>
<dbReference type="InterPro" id="IPR047296">
    <property type="entry name" value="GIY-YIG_UvrC_Cho"/>
</dbReference>
<dbReference type="InterPro" id="IPR003583">
    <property type="entry name" value="Hlx-hairpin-Hlx_DNA-bd_motif"/>
</dbReference>
<dbReference type="InterPro" id="IPR010994">
    <property type="entry name" value="RuvA_2-like"/>
</dbReference>
<dbReference type="InterPro" id="IPR001943">
    <property type="entry name" value="UVR_dom"/>
</dbReference>
<dbReference type="InterPro" id="IPR036876">
    <property type="entry name" value="UVR_dom_sf"/>
</dbReference>
<dbReference type="InterPro" id="IPR050066">
    <property type="entry name" value="UvrABC_protein_C"/>
</dbReference>
<dbReference type="InterPro" id="IPR004791">
    <property type="entry name" value="UvrC"/>
</dbReference>
<dbReference type="InterPro" id="IPR001162">
    <property type="entry name" value="UvrC_RNase_H_dom"/>
</dbReference>
<dbReference type="InterPro" id="IPR038476">
    <property type="entry name" value="UvrC_RNase_H_dom_sf"/>
</dbReference>
<dbReference type="NCBIfam" id="NF001824">
    <property type="entry name" value="PRK00558.1-5"/>
    <property type="match status" value="1"/>
</dbReference>
<dbReference type="NCBIfam" id="TIGR00194">
    <property type="entry name" value="uvrC"/>
    <property type="match status" value="1"/>
</dbReference>
<dbReference type="PANTHER" id="PTHR30562:SF1">
    <property type="entry name" value="UVRABC SYSTEM PROTEIN C"/>
    <property type="match status" value="1"/>
</dbReference>
<dbReference type="PANTHER" id="PTHR30562">
    <property type="entry name" value="UVRC/OXIDOREDUCTASE"/>
    <property type="match status" value="1"/>
</dbReference>
<dbReference type="Pfam" id="PF01541">
    <property type="entry name" value="GIY-YIG"/>
    <property type="match status" value="1"/>
</dbReference>
<dbReference type="Pfam" id="PF14520">
    <property type="entry name" value="HHH_5"/>
    <property type="match status" value="1"/>
</dbReference>
<dbReference type="Pfam" id="PF02151">
    <property type="entry name" value="UVR"/>
    <property type="match status" value="1"/>
</dbReference>
<dbReference type="Pfam" id="PF22920">
    <property type="entry name" value="UvrC_RNaseH"/>
    <property type="match status" value="1"/>
</dbReference>
<dbReference type="Pfam" id="PF08459">
    <property type="entry name" value="UvrC_RNaseH_dom"/>
    <property type="match status" value="1"/>
</dbReference>
<dbReference type="SMART" id="SM00465">
    <property type="entry name" value="GIYc"/>
    <property type="match status" value="1"/>
</dbReference>
<dbReference type="SMART" id="SM00278">
    <property type="entry name" value="HhH1"/>
    <property type="match status" value="2"/>
</dbReference>
<dbReference type="SUPFAM" id="SSF46600">
    <property type="entry name" value="C-terminal UvrC-binding domain of UvrB"/>
    <property type="match status" value="1"/>
</dbReference>
<dbReference type="SUPFAM" id="SSF82771">
    <property type="entry name" value="GIY-YIG endonuclease"/>
    <property type="match status" value="1"/>
</dbReference>
<dbReference type="SUPFAM" id="SSF47781">
    <property type="entry name" value="RuvA domain 2-like"/>
    <property type="match status" value="1"/>
</dbReference>
<dbReference type="PROSITE" id="PS50164">
    <property type="entry name" value="GIY_YIG"/>
    <property type="match status" value="1"/>
</dbReference>
<dbReference type="PROSITE" id="PS50151">
    <property type="entry name" value="UVR"/>
    <property type="match status" value="1"/>
</dbReference>
<dbReference type="PROSITE" id="PS50165">
    <property type="entry name" value="UVRC"/>
    <property type="match status" value="1"/>
</dbReference>
<gene>
    <name evidence="1" type="primary">uvrC</name>
    <name type="ordered locus">Mjls_2436</name>
</gene>
<evidence type="ECO:0000255" key="1">
    <source>
        <dbReference type="HAMAP-Rule" id="MF_00203"/>
    </source>
</evidence>
<name>UVRC_MYCSJ</name>
<reference key="1">
    <citation type="submission" date="2007-02" db="EMBL/GenBank/DDBJ databases">
        <title>Complete sequence of Mycobacterium sp. JLS.</title>
        <authorList>
            <consortium name="US DOE Joint Genome Institute"/>
            <person name="Copeland A."/>
            <person name="Lucas S."/>
            <person name="Lapidus A."/>
            <person name="Barry K."/>
            <person name="Detter J.C."/>
            <person name="Glavina del Rio T."/>
            <person name="Hammon N."/>
            <person name="Israni S."/>
            <person name="Dalin E."/>
            <person name="Tice H."/>
            <person name="Pitluck S."/>
            <person name="Chain P."/>
            <person name="Malfatti S."/>
            <person name="Shin M."/>
            <person name="Vergez L."/>
            <person name="Schmutz J."/>
            <person name="Larimer F."/>
            <person name="Land M."/>
            <person name="Hauser L."/>
            <person name="Kyrpides N."/>
            <person name="Mikhailova N."/>
            <person name="Miller C.D."/>
            <person name="Anderson A.J."/>
            <person name="Sims R.C."/>
            <person name="Richardson P."/>
        </authorList>
    </citation>
    <scope>NUCLEOTIDE SEQUENCE [LARGE SCALE GENOMIC DNA]</scope>
    <source>
        <strain>JLS</strain>
    </source>
</reference>
<protein>
    <recommendedName>
        <fullName evidence="1">UvrABC system protein C</fullName>
        <shortName evidence="1">Protein UvrC</shortName>
    </recommendedName>
    <alternativeName>
        <fullName evidence="1">Excinuclease ABC subunit C</fullName>
    </alternativeName>
</protein>
<sequence>MPDPSTYRPAPGSIPVEPGVYRFRDPHGRVIYVGKAKSLRSRLNSYFADLSGLAPRTRQMVMTAAKVEWTVVNTEVEALQLEYNWIKEFDPRFNIRYRDDKSYPVLAVTLNEEFPRLKVYRGPRKKGVRYFGPYSHAWAIRETVDLLTRVFPARTCSAGVFKRHNQIDRPCLLGYIDKCSAPCVGRVSAEQHRQIVLDFCDFLAGKTDRLVRDLERKMTAAAEDLDFERAARLRDDIGALRRALEKQTVVFGDGTDADVVAFADDDLEAAVQVFHVRGGRVRGQRGWIVEKSGEPGESGEGQLVEQFLTQFYGDQAELGSAGDNAGDSGQDEATNPVPRQVLVPCLPDNADELTEWLSQLRGSRVALRVPQRGDKKALFETVQRNAKEALAQHKLKRAGDFTARTAALQSIQDTLGLADAPLRIECIDISHVQGTDVVASLVVFEDGLPRKSDYRHYAIREAAGDGRSDDVASIAEVTRRRFYRHLHDTQHPTELSAEGKSRKFAYPPNLFVVDGGAPQVNAAQAVLDELGISDVAVIGLAKRLEEVWVPSGSDLGPEPIILPRNSEGLYLLQRVRDEAHRFAITYHRSKRSKRMTASALDSVRGLGEHRRKALVTHFGSVARLKEASVEEITAVPGIGVTTARAVLEALGVPQAAPADSGTAAAVIDDDQRRVTG</sequence>
<accession>A3PZ93</accession>
<feature type="chain" id="PRO_1000077810" description="UvrABC system protein C">
    <location>
        <begin position="1"/>
        <end position="676"/>
    </location>
</feature>
<feature type="domain" description="GIY-YIG" evidence="1">
    <location>
        <begin position="16"/>
        <end position="95"/>
    </location>
</feature>
<feature type="domain" description="UVR" evidence="1">
    <location>
        <begin position="208"/>
        <end position="243"/>
    </location>
</feature>